<reference key="1">
    <citation type="journal article" date="2007" name="Nature">
        <title>Evolution of genes and genomes on the Drosophila phylogeny.</title>
        <authorList>
            <consortium name="Drosophila 12 genomes consortium"/>
        </authorList>
    </citation>
    <scope>NUCLEOTIDE SEQUENCE [LARGE SCALE GENOMIC DNA]</scope>
    <source>
        <strain>Tai18E2 / Tucson 14021-0261.01</strain>
    </source>
</reference>
<protein>
    <recommendedName>
        <fullName evidence="4">Adenylyltransferase and sulfurtransferase MOCS3</fullName>
    </recommendedName>
    <alternativeName>
        <fullName evidence="4">Molybdenum cofactor synthesis protein 3</fullName>
    </alternativeName>
    <alternativeName>
        <fullName evidence="3">Ubiquitin activating enzyme 4</fullName>
    </alternativeName>
    <domain>
        <recommendedName>
            <fullName evidence="4">Molybdopterin-synthase adenylyltransferase</fullName>
            <ecNumber evidence="4">2.7.7.80</ecNumber>
        </recommendedName>
        <alternativeName>
            <fullName evidence="4">Adenylyltransferase MOCS3</fullName>
        </alternativeName>
        <alternativeName>
            <fullName evidence="4">Sulfur carrier protein MOCS2A adenylyltransferase</fullName>
        </alternativeName>
    </domain>
    <domain>
        <recommendedName>
            <fullName evidence="4">Molybdopterin-synthase sulfurtransferase</fullName>
            <ecNumber evidence="4">2.8.1.11</ecNumber>
        </recommendedName>
        <alternativeName>
            <fullName evidence="4">Sulfur carrier protein MOCS2A sulfurtransferase</fullName>
        </alternativeName>
        <alternativeName>
            <fullName evidence="4">Sulfurtransferase MOCS3</fullName>
        </alternativeName>
    </domain>
</protein>
<accession>B4NXF7</accession>
<sequence length="453" mass="49965">MMESEVDSEQSRLKREIAELRAALNRKEQCLRELEASVSSDASAEEQVVGNALESPGRAVHTKLTNDDIARYSRQLILPDFGVQGQLKLKNSSVLIVGLGGLGCPAAQYLAAAGCGRLGLIDYDEVERSNFHRQILHSESRCGMSKAESARIALLELNPHCEIHCHSRLLYSQNALHIIRGYDVVLDCSDNVPTRYLLSDACVMLRKPLVSGSALKMDGQLTVYNYGNGPCYRCIYPVPPPPEAVTNCGDGGVLGAVTGTIGAMQALEAIKVIVGLGDVLAGRLLIFDGSSGLFRNIRIRSKRPNCHVCSAQPLITELIDYEMFCGMHATDKDNPLQLLSTDERLSVKDYHAKLQAQPHLLIDVRPTAEFEICQLPEAVNVPLVEILDDSYLKRFGKQLEDKELPIILLCRRGNDSQIAVQHVRNRFPMHSVRDLIGGLHAWTNSVDPSFPIY</sequence>
<name>MOCS3_DROYA</name>
<organism>
    <name type="scientific">Drosophila yakuba</name>
    <name type="common">Fruit fly</name>
    <dbReference type="NCBI Taxonomy" id="7245"/>
    <lineage>
        <taxon>Eukaryota</taxon>
        <taxon>Metazoa</taxon>
        <taxon>Ecdysozoa</taxon>
        <taxon>Arthropoda</taxon>
        <taxon>Hexapoda</taxon>
        <taxon>Insecta</taxon>
        <taxon>Pterygota</taxon>
        <taxon>Neoptera</taxon>
        <taxon>Endopterygota</taxon>
        <taxon>Diptera</taxon>
        <taxon>Brachycera</taxon>
        <taxon>Muscomorpha</taxon>
        <taxon>Ephydroidea</taxon>
        <taxon>Drosophilidae</taxon>
        <taxon>Drosophila</taxon>
        <taxon>Sophophora</taxon>
    </lineage>
</organism>
<keyword id="KW-0067">ATP-binding</keyword>
<keyword id="KW-0963">Cytoplasm</keyword>
<keyword id="KW-0479">Metal-binding</keyword>
<keyword id="KW-0501">Molybdenum cofactor biosynthesis</keyword>
<keyword id="KW-0511">Multifunctional enzyme</keyword>
<keyword id="KW-0547">Nucleotide-binding</keyword>
<keyword id="KW-0548">Nucleotidyltransferase</keyword>
<keyword id="KW-0597">Phosphoprotein</keyword>
<keyword id="KW-0808">Transferase</keyword>
<keyword id="KW-0819">tRNA processing</keyword>
<keyword id="KW-0862">Zinc</keyword>
<feature type="chain" id="PRO_0000369212" description="Adenylyltransferase and sulfurtransferase MOCS3">
    <location>
        <begin position="1"/>
        <end position="453"/>
    </location>
</feature>
<feature type="domain" description="Rhodanese" evidence="4">
    <location>
        <begin position="355"/>
        <end position="451"/>
    </location>
</feature>
<feature type="active site" description="Glycyl thioester intermediate; for adenylyltransferase activity" evidence="4">
    <location>
        <position position="248"/>
    </location>
</feature>
<feature type="active site" description="Cysteine persulfide intermediate; for sulfurtransferase activity" evidence="4">
    <location>
        <position position="410"/>
    </location>
</feature>
<feature type="binding site" evidence="4">
    <location>
        <position position="101"/>
    </location>
    <ligand>
        <name>ATP</name>
        <dbReference type="ChEBI" id="CHEBI:30616"/>
    </ligand>
</feature>
<feature type="binding site" evidence="4">
    <location>
        <position position="122"/>
    </location>
    <ligand>
        <name>ATP</name>
        <dbReference type="ChEBI" id="CHEBI:30616"/>
    </ligand>
</feature>
<feature type="binding site" evidence="4">
    <location>
        <begin position="129"/>
        <end position="133"/>
    </location>
    <ligand>
        <name>ATP</name>
        <dbReference type="ChEBI" id="CHEBI:30616"/>
    </ligand>
</feature>
<feature type="binding site" evidence="4">
    <location>
        <position position="146"/>
    </location>
    <ligand>
        <name>ATP</name>
        <dbReference type="ChEBI" id="CHEBI:30616"/>
    </ligand>
</feature>
<feature type="binding site" evidence="4">
    <location>
        <begin position="190"/>
        <end position="191"/>
    </location>
    <ligand>
        <name>ATP</name>
        <dbReference type="ChEBI" id="CHEBI:30616"/>
    </ligand>
</feature>
<feature type="binding site" evidence="4">
    <location>
        <position position="231"/>
    </location>
    <ligand>
        <name>Zn(2+)</name>
        <dbReference type="ChEBI" id="CHEBI:29105"/>
    </ligand>
</feature>
<feature type="binding site" evidence="4">
    <location>
        <position position="234"/>
    </location>
    <ligand>
        <name>Zn(2+)</name>
        <dbReference type="ChEBI" id="CHEBI:29105"/>
    </ligand>
</feature>
<feature type="binding site" evidence="4">
    <location>
        <position position="306"/>
    </location>
    <ligand>
        <name>Zn(2+)</name>
        <dbReference type="ChEBI" id="CHEBI:29105"/>
    </ligand>
</feature>
<feature type="binding site" evidence="4">
    <location>
        <position position="309"/>
    </location>
    <ligand>
        <name>Zn(2+)</name>
        <dbReference type="ChEBI" id="CHEBI:29105"/>
    </ligand>
</feature>
<feature type="modified residue" description="Phosphothreonine" evidence="1">
    <location>
        <position position="62"/>
    </location>
</feature>
<gene>
    <name evidence="3" type="primary">Uba4</name>
    <name type="ORF">GE18783</name>
</gene>
<dbReference type="EC" id="2.7.7.80" evidence="4"/>
<dbReference type="EC" id="2.8.1.11" evidence="4"/>
<dbReference type="EMBL" id="CM000157">
    <property type="protein sequence ID" value="EDW88548.1"/>
    <property type="molecule type" value="Genomic_DNA"/>
</dbReference>
<dbReference type="SMR" id="B4NXF7"/>
<dbReference type="EnsemblMetazoa" id="FBtr0265301">
    <property type="protein sequence ID" value="FBpp0263793"/>
    <property type="gene ID" value="FBgn0236169"/>
</dbReference>
<dbReference type="EnsemblMetazoa" id="XM_002088800.4">
    <property type="protein sequence ID" value="XP_002088836.1"/>
    <property type="gene ID" value="LOC6527756"/>
</dbReference>
<dbReference type="GeneID" id="6527756"/>
<dbReference type="KEGG" id="dya:Dyak_GE18783"/>
<dbReference type="CTD" id="34187"/>
<dbReference type="eggNOG" id="KOG2017">
    <property type="taxonomic scope" value="Eukaryota"/>
</dbReference>
<dbReference type="HOGENOM" id="CLU_013325_1_2_1"/>
<dbReference type="OMA" id="IPDVGMD"/>
<dbReference type="OrthoDB" id="10261062at2759"/>
<dbReference type="PhylomeDB" id="B4NXF7"/>
<dbReference type="UniPathway" id="UPA00344"/>
<dbReference type="UniPathway" id="UPA00988"/>
<dbReference type="Proteomes" id="UP000002282">
    <property type="component" value="Chromosome 2L"/>
</dbReference>
<dbReference type="GO" id="GO:0005829">
    <property type="term" value="C:cytosol"/>
    <property type="evidence" value="ECO:0000250"/>
    <property type="project" value="UniProtKB"/>
</dbReference>
<dbReference type="GO" id="GO:0005524">
    <property type="term" value="F:ATP binding"/>
    <property type="evidence" value="ECO:0007669"/>
    <property type="project" value="UniProtKB-KW"/>
</dbReference>
<dbReference type="GO" id="GO:0046872">
    <property type="term" value="F:metal ion binding"/>
    <property type="evidence" value="ECO:0007669"/>
    <property type="project" value="UniProtKB-KW"/>
</dbReference>
<dbReference type="GO" id="GO:0061605">
    <property type="term" value="F:molybdopterin-synthase adenylyltransferase activity"/>
    <property type="evidence" value="ECO:0007669"/>
    <property type="project" value="UniProtKB-EC"/>
</dbReference>
<dbReference type="GO" id="GO:0061604">
    <property type="term" value="F:molybdopterin-synthase sulfurtransferase activity"/>
    <property type="evidence" value="ECO:0000250"/>
    <property type="project" value="UniProtKB"/>
</dbReference>
<dbReference type="GO" id="GO:0004792">
    <property type="term" value="F:thiosulfate-cyanide sulfurtransferase activity"/>
    <property type="evidence" value="ECO:0007669"/>
    <property type="project" value="TreeGrafter"/>
</dbReference>
<dbReference type="GO" id="GO:0042292">
    <property type="term" value="F:URM1 activating enzyme activity"/>
    <property type="evidence" value="ECO:0007669"/>
    <property type="project" value="TreeGrafter"/>
</dbReference>
<dbReference type="GO" id="GO:0006777">
    <property type="term" value="P:Mo-molybdopterin cofactor biosynthetic process"/>
    <property type="evidence" value="ECO:0000250"/>
    <property type="project" value="UniProtKB"/>
</dbReference>
<dbReference type="GO" id="GO:0032447">
    <property type="term" value="P:protein urmylation"/>
    <property type="evidence" value="ECO:0007669"/>
    <property type="project" value="EnsemblMetazoa"/>
</dbReference>
<dbReference type="GO" id="GO:0002143">
    <property type="term" value="P:tRNA wobble position uridine thiolation"/>
    <property type="evidence" value="ECO:0007669"/>
    <property type="project" value="InterPro"/>
</dbReference>
<dbReference type="CDD" id="cd01526">
    <property type="entry name" value="RHOD_ThiF"/>
    <property type="match status" value="1"/>
</dbReference>
<dbReference type="CDD" id="cd00757">
    <property type="entry name" value="ThiF_MoeB_HesA_family"/>
    <property type="match status" value="1"/>
</dbReference>
<dbReference type="FunFam" id="3.40.250.10:FF:000014">
    <property type="entry name" value="Adenylyltransferase and sulfurtransferase MOCS3"/>
    <property type="match status" value="1"/>
</dbReference>
<dbReference type="FunFam" id="3.40.50.720:FF:000206">
    <property type="entry name" value="Adenylyltransferase and sulfurtransferase MOCS3"/>
    <property type="match status" value="1"/>
</dbReference>
<dbReference type="Gene3D" id="3.40.50.720">
    <property type="entry name" value="NAD(P)-binding Rossmann-like Domain"/>
    <property type="match status" value="1"/>
</dbReference>
<dbReference type="Gene3D" id="3.40.250.10">
    <property type="entry name" value="Rhodanese-like domain"/>
    <property type="match status" value="1"/>
</dbReference>
<dbReference type="HAMAP" id="MF_03049">
    <property type="entry name" value="MOCS3_Uba4"/>
    <property type="match status" value="1"/>
</dbReference>
<dbReference type="InterPro" id="IPR028885">
    <property type="entry name" value="MOCS3/Uba4"/>
</dbReference>
<dbReference type="InterPro" id="IPR001763">
    <property type="entry name" value="Rhodanese-like_dom"/>
</dbReference>
<dbReference type="InterPro" id="IPR036873">
    <property type="entry name" value="Rhodanese-like_dom_sf"/>
</dbReference>
<dbReference type="InterPro" id="IPR045886">
    <property type="entry name" value="ThiF/MoeB/HesA"/>
</dbReference>
<dbReference type="InterPro" id="IPR000594">
    <property type="entry name" value="ThiF_NAD_FAD-bd"/>
</dbReference>
<dbReference type="InterPro" id="IPR035985">
    <property type="entry name" value="Ubiquitin-activating_enz"/>
</dbReference>
<dbReference type="NCBIfam" id="NF004281">
    <property type="entry name" value="PRK05690.1"/>
    <property type="match status" value="1"/>
</dbReference>
<dbReference type="PANTHER" id="PTHR10953:SF102">
    <property type="entry name" value="ADENYLYLTRANSFERASE AND SULFURTRANSFERASE MOCS3"/>
    <property type="match status" value="1"/>
</dbReference>
<dbReference type="PANTHER" id="PTHR10953">
    <property type="entry name" value="UBIQUITIN-ACTIVATING ENZYME E1"/>
    <property type="match status" value="1"/>
</dbReference>
<dbReference type="Pfam" id="PF00581">
    <property type="entry name" value="Rhodanese"/>
    <property type="match status" value="1"/>
</dbReference>
<dbReference type="Pfam" id="PF00899">
    <property type="entry name" value="ThiF"/>
    <property type="match status" value="1"/>
</dbReference>
<dbReference type="SMART" id="SM00450">
    <property type="entry name" value="RHOD"/>
    <property type="match status" value="1"/>
</dbReference>
<dbReference type="SUPFAM" id="SSF69572">
    <property type="entry name" value="Activating enzymes of the ubiquitin-like proteins"/>
    <property type="match status" value="1"/>
</dbReference>
<dbReference type="PROSITE" id="PS50206">
    <property type="entry name" value="RHODANESE_3"/>
    <property type="match status" value="1"/>
</dbReference>
<evidence type="ECO:0000250" key="1"/>
<evidence type="ECO:0000250" key="2">
    <source>
        <dbReference type="UniProtKB" id="O95396"/>
    </source>
</evidence>
<evidence type="ECO:0000250" key="3">
    <source>
        <dbReference type="UniProtKB" id="Q9VLJ8"/>
    </source>
</evidence>
<evidence type="ECO:0000255" key="4">
    <source>
        <dbReference type="HAMAP-Rule" id="MF_03049"/>
    </source>
</evidence>
<proteinExistence type="inferred from homology"/>
<comment type="function">
    <text evidence="4">Plays a central role in 2-thiolation of mcm(5)S(2)U at tRNA wobble positions of cytosolic tRNA(Lys), tRNA(Glu) and tRNA(Gln). Also essential during biosynthesis of the molybdenum cofactor. Acts by mediating the C-terminal thiocarboxylation of sulfur carriers URM1 and MOCS2A. Its N-terminus first activates URM1 and MOCS2A as acyl-adenylates (-COAMP), then the persulfide sulfur on the catalytic cysteine is transferred to URM1 and MOCS2A to form thiocarboxylation (-COSH) of their C-terminus. The reaction probably involves hydrogen sulfide that is generated from the persulfide intermediate and that acts as a nucleophile towards URM1 and MOCS2A. Subsequently, a transient disulfide bond is formed. Does not use thiosulfate as sulfur donor; NFS1 probably acting as a sulfur donor for thiocarboxylation reactions.</text>
</comment>
<comment type="catalytic activity">
    <reaction evidence="4">
        <text>[molybdopterin-synthase sulfur-carrier protein]-C-terminal Gly-Gly + ATP + H(+) = [molybdopterin-synthase sulfur-carrier protein]-C-terminal Gly-Gly-AMP + diphosphate</text>
        <dbReference type="Rhea" id="RHEA:43616"/>
        <dbReference type="Rhea" id="RHEA-COMP:12159"/>
        <dbReference type="Rhea" id="RHEA-COMP:12202"/>
        <dbReference type="ChEBI" id="CHEBI:15378"/>
        <dbReference type="ChEBI" id="CHEBI:30616"/>
        <dbReference type="ChEBI" id="CHEBI:33019"/>
        <dbReference type="ChEBI" id="CHEBI:90618"/>
        <dbReference type="ChEBI" id="CHEBI:90778"/>
        <dbReference type="EC" id="2.7.7.80"/>
    </reaction>
</comment>
<comment type="catalytic activity">
    <reaction evidence="4">
        <text>[molybdopterin-synthase sulfur-carrier protein]-C-terminal Gly-Gly-AMP + S-sulfanyl-L-cysteinyl-[cysteine desulfurase] + AH2 = [molybdopterin-synthase sulfur-carrier protein]-C-terminal-Gly-aminoethanethioate + L-cysteinyl-[cysteine desulfurase] + A + AMP + 2 H(+)</text>
        <dbReference type="Rhea" id="RHEA:48612"/>
        <dbReference type="Rhea" id="RHEA-COMP:12157"/>
        <dbReference type="Rhea" id="RHEA-COMP:12158"/>
        <dbReference type="Rhea" id="RHEA-COMP:12159"/>
        <dbReference type="Rhea" id="RHEA-COMP:19907"/>
        <dbReference type="ChEBI" id="CHEBI:13193"/>
        <dbReference type="ChEBI" id="CHEBI:15378"/>
        <dbReference type="ChEBI" id="CHEBI:17499"/>
        <dbReference type="ChEBI" id="CHEBI:29950"/>
        <dbReference type="ChEBI" id="CHEBI:61963"/>
        <dbReference type="ChEBI" id="CHEBI:90618"/>
        <dbReference type="ChEBI" id="CHEBI:232372"/>
        <dbReference type="ChEBI" id="CHEBI:456215"/>
        <dbReference type="EC" id="2.8.1.11"/>
    </reaction>
</comment>
<comment type="cofactor">
    <cofactor evidence="4">
        <name>Zn(2+)</name>
        <dbReference type="ChEBI" id="CHEBI:29105"/>
    </cofactor>
    <text evidence="4">Binds 1 zinc ion per subunit.</text>
</comment>
<comment type="pathway">
    <text evidence="4">tRNA modification; 5-methoxycarbonylmethyl-2-thiouridine-tRNA biosynthesis.</text>
</comment>
<comment type="pathway">
    <text evidence="4">Cofactor biosynthesis; molybdopterin biosynthesis.</text>
</comment>
<comment type="subcellular location">
    <subcellularLocation>
        <location evidence="2">Cytoplasm</location>
        <location evidence="2">Cytosol</location>
    </subcellularLocation>
</comment>
<comment type="similarity">
    <text evidence="4">In the N-terminal section; belongs to the HesA/MoeB/ThiF family. UBA4 subfamily.</text>
</comment>